<name>BCHD_CHLP8</name>
<feature type="chain" id="PRO_0000206850" description="Magnesium-chelatase 67 kDa subunit">
    <location>
        <begin position="1"/>
        <end position="619"/>
    </location>
</feature>
<feature type="domain" description="VWFA" evidence="2">
    <location>
        <begin position="431"/>
        <end position="619"/>
    </location>
</feature>
<feature type="region of interest" description="Disordered" evidence="3">
    <location>
        <begin position="273"/>
        <end position="321"/>
    </location>
</feature>
<feature type="compositionally biased region" description="Acidic residues" evidence="3">
    <location>
        <begin position="280"/>
        <end position="321"/>
    </location>
</feature>
<feature type="binding site" evidence="1">
    <location>
        <begin position="33"/>
        <end position="40"/>
    </location>
    <ligand>
        <name>ATP</name>
        <dbReference type="ChEBI" id="CHEBI:30616"/>
    </ligand>
</feature>
<organism>
    <name type="scientific">Chlorobaculum parvum (strain DSM 263 / NCIMB 8327)</name>
    <name type="common">Chlorobium vibrioforme subsp. thiosulfatophilum</name>
    <dbReference type="NCBI Taxonomy" id="517417"/>
    <lineage>
        <taxon>Bacteria</taxon>
        <taxon>Pseudomonadati</taxon>
        <taxon>Chlorobiota</taxon>
        <taxon>Chlorobiia</taxon>
        <taxon>Chlorobiales</taxon>
        <taxon>Chlorobiaceae</taxon>
        <taxon>Chlorobaculum</taxon>
    </lineage>
</organism>
<evidence type="ECO:0000255" key="1"/>
<evidence type="ECO:0000255" key="2">
    <source>
        <dbReference type="PROSITE-ProRule" id="PRU00219"/>
    </source>
</evidence>
<evidence type="ECO:0000256" key="3">
    <source>
        <dbReference type="SAM" id="MobiDB-lite"/>
    </source>
</evidence>
<evidence type="ECO:0000305" key="4"/>
<accession>O50313</accession>
<accession>B3QMJ2</accession>
<keyword id="KW-0067">ATP-binding</keyword>
<keyword id="KW-0077">Bacteriochlorophyll biosynthesis</keyword>
<keyword id="KW-0149">Chlorophyll biosynthesis</keyword>
<keyword id="KW-0436">Ligase</keyword>
<keyword id="KW-0547">Nucleotide-binding</keyword>
<keyword id="KW-0602">Photosynthesis</keyword>
<comment type="function">
    <text>Involved in bacteriochlorophyll biosynthesis; introduces a magnesium ion into protoporphyrin IX to yield Mg-protoporphyrin IX.</text>
</comment>
<comment type="catalytic activity">
    <reaction>
        <text>protoporphyrin IX + Mg(2+) + ATP + H2O = Mg-protoporphyrin IX + ADP + phosphate + 3 H(+)</text>
        <dbReference type="Rhea" id="RHEA:13961"/>
        <dbReference type="ChEBI" id="CHEBI:15377"/>
        <dbReference type="ChEBI" id="CHEBI:15378"/>
        <dbReference type="ChEBI" id="CHEBI:18420"/>
        <dbReference type="ChEBI" id="CHEBI:30616"/>
        <dbReference type="ChEBI" id="CHEBI:43474"/>
        <dbReference type="ChEBI" id="CHEBI:57306"/>
        <dbReference type="ChEBI" id="CHEBI:60492"/>
        <dbReference type="ChEBI" id="CHEBI:456216"/>
        <dbReference type="EC" id="6.6.1.1"/>
    </reaction>
</comment>
<comment type="pathway">
    <text>Porphyrin-containing compound metabolism; bacteriochlorophyll biosynthesis.</text>
</comment>
<comment type="similarity">
    <text evidence="4">Belongs to the Mg-chelatase subunits D/I family.</text>
</comment>
<dbReference type="EC" id="6.6.1.1"/>
<dbReference type="EMBL" id="Z83933">
    <property type="protein sequence ID" value="CAB06300.1"/>
    <property type="molecule type" value="Genomic_DNA"/>
</dbReference>
<dbReference type="EMBL" id="CP001099">
    <property type="protein sequence ID" value="ACF11145.1"/>
    <property type="molecule type" value="Genomic_DNA"/>
</dbReference>
<dbReference type="PIR" id="T17193">
    <property type="entry name" value="T17193"/>
</dbReference>
<dbReference type="RefSeq" id="WP_012501978.1">
    <property type="nucleotide sequence ID" value="NC_011027.1"/>
</dbReference>
<dbReference type="SMR" id="O50313"/>
<dbReference type="STRING" id="517417.Cpar_0726"/>
<dbReference type="KEGG" id="cpc:Cpar_0726"/>
<dbReference type="eggNOG" id="COG1239">
    <property type="taxonomic scope" value="Bacteria"/>
</dbReference>
<dbReference type="eggNOG" id="COG1240">
    <property type="taxonomic scope" value="Bacteria"/>
</dbReference>
<dbReference type="HOGENOM" id="CLU_016684_6_2_10"/>
<dbReference type="OrthoDB" id="9775079at2"/>
<dbReference type="UniPathway" id="UPA00669"/>
<dbReference type="Proteomes" id="UP000008811">
    <property type="component" value="Chromosome"/>
</dbReference>
<dbReference type="GO" id="GO:0005524">
    <property type="term" value="F:ATP binding"/>
    <property type="evidence" value="ECO:0007669"/>
    <property type="project" value="UniProtKB-KW"/>
</dbReference>
<dbReference type="GO" id="GO:0016887">
    <property type="term" value="F:ATP hydrolysis activity"/>
    <property type="evidence" value="ECO:0007669"/>
    <property type="project" value="InterPro"/>
</dbReference>
<dbReference type="GO" id="GO:0016851">
    <property type="term" value="F:magnesium chelatase activity"/>
    <property type="evidence" value="ECO:0007669"/>
    <property type="project" value="UniProtKB-EC"/>
</dbReference>
<dbReference type="GO" id="GO:0030494">
    <property type="term" value="P:bacteriochlorophyll biosynthetic process"/>
    <property type="evidence" value="ECO:0007669"/>
    <property type="project" value="UniProtKB-UniPathway"/>
</dbReference>
<dbReference type="GO" id="GO:0015979">
    <property type="term" value="P:photosynthesis"/>
    <property type="evidence" value="ECO:0007669"/>
    <property type="project" value="UniProtKB-KW"/>
</dbReference>
<dbReference type="CDD" id="cd00009">
    <property type="entry name" value="AAA"/>
    <property type="match status" value="1"/>
</dbReference>
<dbReference type="CDD" id="cd01451">
    <property type="entry name" value="vWA_Magnesium_chelatase"/>
    <property type="match status" value="1"/>
</dbReference>
<dbReference type="Gene3D" id="1.10.8.80">
    <property type="entry name" value="Magnesium chelatase subunit I, C-Terminal domain"/>
    <property type="match status" value="1"/>
</dbReference>
<dbReference type="Gene3D" id="3.40.50.300">
    <property type="entry name" value="P-loop containing nucleotide triphosphate hydrolases"/>
    <property type="match status" value="1"/>
</dbReference>
<dbReference type="Gene3D" id="3.40.50.410">
    <property type="entry name" value="von Willebrand factor, type A domain"/>
    <property type="match status" value="1"/>
</dbReference>
<dbReference type="InterPro" id="IPR003593">
    <property type="entry name" value="AAA+_ATPase"/>
</dbReference>
<dbReference type="InterPro" id="IPR041702">
    <property type="entry name" value="BchD/ChlD_VWA"/>
</dbReference>
<dbReference type="InterPro" id="IPR041628">
    <property type="entry name" value="ChlI/MoxR_AAA_lid"/>
</dbReference>
<dbReference type="InterPro" id="IPR011776">
    <property type="entry name" value="Mg_chelatase_ATPase-dsu"/>
</dbReference>
<dbReference type="InterPro" id="IPR000523">
    <property type="entry name" value="Mg_chelatse_chII-like_cat_dom"/>
</dbReference>
<dbReference type="InterPro" id="IPR027417">
    <property type="entry name" value="P-loop_NTPase"/>
</dbReference>
<dbReference type="InterPro" id="IPR002035">
    <property type="entry name" value="VWF_A"/>
</dbReference>
<dbReference type="InterPro" id="IPR036465">
    <property type="entry name" value="vWFA_dom_sf"/>
</dbReference>
<dbReference type="NCBIfam" id="TIGR02031">
    <property type="entry name" value="BchD-ChlD"/>
    <property type="match status" value="1"/>
</dbReference>
<dbReference type="PANTHER" id="PTHR43473">
    <property type="entry name" value="MAGNESIUM-CHELATASE SUBUNIT CHLD, CHLOROPLASTIC"/>
    <property type="match status" value="1"/>
</dbReference>
<dbReference type="PANTHER" id="PTHR43473:SF2">
    <property type="entry name" value="MAGNESIUM-CHELATASE SUBUNIT CHLD, CHLOROPLASTIC"/>
    <property type="match status" value="1"/>
</dbReference>
<dbReference type="Pfam" id="PF17863">
    <property type="entry name" value="AAA_lid_2"/>
    <property type="match status" value="1"/>
</dbReference>
<dbReference type="Pfam" id="PF01078">
    <property type="entry name" value="Mg_chelatase"/>
    <property type="match status" value="1"/>
</dbReference>
<dbReference type="Pfam" id="PF13519">
    <property type="entry name" value="VWA_2"/>
    <property type="match status" value="1"/>
</dbReference>
<dbReference type="SMART" id="SM00382">
    <property type="entry name" value="AAA"/>
    <property type="match status" value="1"/>
</dbReference>
<dbReference type="SMART" id="SM00327">
    <property type="entry name" value="VWA"/>
    <property type="match status" value="1"/>
</dbReference>
<dbReference type="SUPFAM" id="SSF52540">
    <property type="entry name" value="P-loop containing nucleoside triphosphate hydrolases"/>
    <property type="match status" value="1"/>
</dbReference>
<dbReference type="SUPFAM" id="SSF53300">
    <property type="entry name" value="vWA-like"/>
    <property type="match status" value="1"/>
</dbReference>
<dbReference type="PROSITE" id="PS50234">
    <property type="entry name" value="VWFA"/>
    <property type="match status" value="1"/>
</dbReference>
<gene>
    <name type="primary">bchD</name>
    <name type="ordered locus">Cpar_0726</name>
</gene>
<reference key="1">
    <citation type="journal article" date="1996" name="Hereditas">
        <title>Clustering of genes with function in the biosynthesis of bacteriochlorophyll and heme in the green sulfur bacterium Chlorobium vibrioforme.</title>
        <authorList>
            <person name="Petersen B.L."/>
            <person name="Moeller M.G."/>
            <person name="Stummann B.M."/>
            <person name="Henningsen K.W."/>
        </authorList>
    </citation>
    <scope>NUCLEOTIDE SEQUENCE [GENOMIC DNA]</scope>
</reference>
<reference key="2">
    <citation type="submission" date="2008-06" db="EMBL/GenBank/DDBJ databases">
        <title>Complete sequence of Chlorobaculum parvum NCIB 8327.</title>
        <authorList>
            <consortium name="US DOE Joint Genome Institute"/>
            <person name="Lucas S."/>
            <person name="Copeland A."/>
            <person name="Lapidus A."/>
            <person name="Glavina del Rio T."/>
            <person name="Dalin E."/>
            <person name="Tice H."/>
            <person name="Bruce D."/>
            <person name="Goodwin L."/>
            <person name="Pitluck S."/>
            <person name="Schmutz J."/>
            <person name="Larimer F."/>
            <person name="Land M."/>
            <person name="Hauser L."/>
            <person name="Kyrpides N."/>
            <person name="Mikhailova N."/>
            <person name="Zhao F."/>
            <person name="Li T."/>
            <person name="Liu Z."/>
            <person name="Overmann J."/>
            <person name="Bryant D.A."/>
            <person name="Richardson P."/>
        </authorList>
    </citation>
    <scope>NUCLEOTIDE SEQUENCE [LARGE SCALE GENOMIC DNA]</scope>
    <source>
        <strain>DSM 263 / NCIMB 8327</strain>
    </source>
</reference>
<sequence length="619" mass="66807">MIAFTDIVGMDLAKQALMLLAVDPSLGGVVIPSTVGSGKSTLARAFADILPEGTPFVELPLNVTEDRLIGGVDLEATLASGQRVVQHGVLSKAHKGVLYVDSLSLLDSSAVSHIMDAMSRGAVIVEREGLSEVHPADFMLVGTYDPSDGEVRMGLLDRIGIIVPFTPVNDYRARKQIVSLVMGTRNEEDTQDELRMLRGIIGAAREQLHHVSITNEQIKGLIQTAISLGVEGNRVDIFAIRAALANAALGQRTEVDDEDLKLAVKLVLVPRATRMPEREPSEEEMQQEEPPPPEEQPEQEGEDENAPPDETDSDADEEQEETPDMIEELMMDAIETDLPENILNISLASKKKAKSGSRGEALNNKRGRFVRSQPGEIKSGKVALIPTLISAAPWQAARKAEKAKKGIKTGALVISTDDVKIKRFRDKSGTLFIFMVDASGSMALNRMRQAKGAVASLLQNAYVHRDQVSLISFRGKQAQVLLPPSQSVDRAKRELDVLPTGGGTPLASALLTGWETAKQARTKGITQIMFVMITDGRGNIPLAAAVDPAAAKAPKEELEKEVEALALSIQSDGIASIVVDTQMNYLSRGEAPKLAQKLGGRYFYLPNAKAEQIVEAALS</sequence>
<proteinExistence type="inferred from homology"/>
<protein>
    <recommendedName>
        <fullName>Magnesium-chelatase 67 kDa subunit</fullName>
        <shortName>Mg-chelatase subunit D</shortName>
        <ecNumber>6.6.1.1</ecNumber>
    </recommendedName>
    <alternativeName>
        <fullName>Mg-protoporphyrin IX chelatase</fullName>
    </alternativeName>
</protein>